<evidence type="ECO:0000255" key="1">
    <source>
        <dbReference type="HAMAP-Rule" id="MF_00194"/>
    </source>
</evidence>
<reference key="1">
    <citation type="journal article" date="2005" name="Nucleic Acids Res.">
        <title>Genome dynamics and diversity of Shigella species, the etiologic agents of bacillary dysentery.</title>
        <authorList>
            <person name="Yang F."/>
            <person name="Yang J."/>
            <person name="Zhang X."/>
            <person name="Chen L."/>
            <person name="Jiang Y."/>
            <person name="Yan Y."/>
            <person name="Tang X."/>
            <person name="Wang J."/>
            <person name="Xiong Z."/>
            <person name="Dong J."/>
            <person name="Xue Y."/>
            <person name="Zhu Y."/>
            <person name="Xu X."/>
            <person name="Sun L."/>
            <person name="Chen S."/>
            <person name="Nie H."/>
            <person name="Peng J."/>
            <person name="Xu J."/>
            <person name="Wang Y."/>
            <person name="Yuan Z."/>
            <person name="Wen Y."/>
            <person name="Yao Z."/>
            <person name="Shen Y."/>
            <person name="Qiang B."/>
            <person name="Hou Y."/>
            <person name="Yu J."/>
            <person name="Jin Q."/>
        </authorList>
    </citation>
    <scope>NUCLEOTIDE SEQUENCE [LARGE SCALE GENOMIC DNA]</scope>
    <source>
        <strain>Sb227</strain>
    </source>
</reference>
<gene>
    <name evidence="1" type="primary">rdgC</name>
    <name type="ordered locus">SBO_0289</name>
</gene>
<comment type="function">
    <text evidence="1">May be involved in recombination.</text>
</comment>
<comment type="subcellular location">
    <subcellularLocation>
        <location evidence="1">Cytoplasm</location>
        <location evidence="1">Nucleoid</location>
    </subcellularLocation>
</comment>
<comment type="similarity">
    <text evidence="1">Belongs to the RdgC family.</text>
</comment>
<name>RDGC_SHIBS</name>
<organism>
    <name type="scientific">Shigella boydii serotype 4 (strain Sb227)</name>
    <dbReference type="NCBI Taxonomy" id="300268"/>
    <lineage>
        <taxon>Bacteria</taxon>
        <taxon>Pseudomonadati</taxon>
        <taxon>Pseudomonadota</taxon>
        <taxon>Gammaproteobacteria</taxon>
        <taxon>Enterobacterales</taxon>
        <taxon>Enterobacteriaceae</taxon>
        <taxon>Shigella</taxon>
    </lineage>
</organism>
<keyword id="KW-0963">Cytoplasm</keyword>
<keyword id="KW-0233">DNA recombination</keyword>
<proteinExistence type="inferred from homology"/>
<sequence>MLWFKNLMVYRLSREISLRAEEMEKQLASMAFTPCGSQDMAKMGWVPPMGSHSDALTHVANGQIVICARKEEKILPSPVIKQALEAKIAKLEAEQARKLKKTEKDSLKDEVLHSLLPRAFSRFSQTMMWIDTVNGLIMVDCASAKKAEDTLALLRKSLGSLPVVPLSMENPIELTLTEWVRSGSAAQGFQLLDEAELKSLLEDGGVIRAKKQDLTSEEITNHIEAGKVVTKLALDWQQRIQFVMCDDGSLKRLKFCDELRDQNEDIDREDFAQRFDADFILMTGELAALIQNLIEGLGGEAQR</sequence>
<dbReference type="EMBL" id="CP000036">
    <property type="protein sequence ID" value="ABB65003.1"/>
    <property type="molecule type" value="Genomic_DNA"/>
</dbReference>
<dbReference type="RefSeq" id="WP_001298537.1">
    <property type="nucleotide sequence ID" value="NC_007613.1"/>
</dbReference>
<dbReference type="SMR" id="Q325K5"/>
<dbReference type="GeneID" id="75202816"/>
<dbReference type="KEGG" id="sbo:SBO_0289"/>
<dbReference type="HOGENOM" id="CLU_052038_1_1_6"/>
<dbReference type="Proteomes" id="UP000007067">
    <property type="component" value="Chromosome"/>
</dbReference>
<dbReference type="GO" id="GO:0043590">
    <property type="term" value="C:bacterial nucleoid"/>
    <property type="evidence" value="ECO:0007669"/>
    <property type="project" value="TreeGrafter"/>
</dbReference>
<dbReference type="GO" id="GO:0005737">
    <property type="term" value="C:cytoplasm"/>
    <property type="evidence" value="ECO:0007669"/>
    <property type="project" value="UniProtKB-UniRule"/>
</dbReference>
<dbReference type="GO" id="GO:0003690">
    <property type="term" value="F:double-stranded DNA binding"/>
    <property type="evidence" value="ECO:0007669"/>
    <property type="project" value="TreeGrafter"/>
</dbReference>
<dbReference type="GO" id="GO:0006310">
    <property type="term" value="P:DNA recombination"/>
    <property type="evidence" value="ECO:0007669"/>
    <property type="project" value="UniProtKB-UniRule"/>
</dbReference>
<dbReference type="GO" id="GO:0000018">
    <property type="term" value="P:regulation of DNA recombination"/>
    <property type="evidence" value="ECO:0007669"/>
    <property type="project" value="TreeGrafter"/>
</dbReference>
<dbReference type="HAMAP" id="MF_00194">
    <property type="entry name" value="RdgC"/>
    <property type="match status" value="1"/>
</dbReference>
<dbReference type="InterPro" id="IPR007476">
    <property type="entry name" value="RdgC"/>
</dbReference>
<dbReference type="NCBIfam" id="NF001460">
    <property type="entry name" value="PRK00321.1-1"/>
    <property type="match status" value="1"/>
</dbReference>
<dbReference type="NCBIfam" id="NF001462">
    <property type="entry name" value="PRK00321.1-3"/>
    <property type="match status" value="1"/>
</dbReference>
<dbReference type="NCBIfam" id="NF001464">
    <property type="entry name" value="PRK00321.1-5"/>
    <property type="match status" value="1"/>
</dbReference>
<dbReference type="PANTHER" id="PTHR38103">
    <property type="entry name" value="RECOMBINATION-ASSOCIATED PROTEIN RDGC"/>
    <property type="match status" value="1"/>
</dbReference>
<dbReference type="PANTHER" id="PTHR38103:SF1">
    <property type="entry name" value="RECOMBINATION-ASSOCIATED PROTEIN RDGC"/>
    <property type="match status" value="1"/>
</dbReference>
<dbReference type="Pfam" id="PF04381">
    <property type="entry name" value="RdgC"/>
    <property type="match status" value="1"/>
</dbReference>
<feature type="chain" id="PRO_1000021238" description="Recombination-associated protein RdgC">
    <location>
        <begin position="1"/>
        <end position="303"/>
    </location>
</feature>
<protein>
    <recommendedName>
        <fullName evidence="1">Recombination-associated protein RdgC</fullName>
    </recommendedName>
</protein>
<accession>Q325K5</accession>